<sequence length="360" mass="41257">MPLSRLIINNFRNLQSLDLELSPNFNFIVGHNGSGKTSLLEAIFYLGHGRSFKSHISNRIIHYQAEDFVLHARIDEGQHQWSVGIQKKRSGDTLLKINGEDGNKISDLAHLLPMQVITPEGLTLLNGGPTFRRAFLDWGLFHQYTEFYSCWANLKRLLKQRNAALHQVRSYAELKPWDIELAKLAEIVSQMRASYAEALRPEIEKTCQFFLPELEIGVSFHQGWEKGTDYAEILAQGFERDKAMGYTMIGPQKADFRFRANGLPVEDVLSRGQLKLLMCALRLAQGEYLVAQKERQCLFLIDDFASELDPIKRELLAHRLRESGSQVFVTAITKDQLNQMQWQESEQDSLFQVQQGMLTK</sequence>
<organism>
    <name type="scientific">Actinobacillus pleuropneumoniae serotype 3 (strain JL03)</name>
    <dbReference type="NCBI Taxonomy" id="434271"/>
    <lineage>
        <taxon>Bacteria</taxon>
        <taxon>Pseudomonadati</taxon>
        <taxon>Pseudomonadota</taxon>
        <taxon>Gammaproteobacteria</taxon>
        <taxon>Pasteurellales</taxon>
        <taxon>Pasteurellaceae</taxon>
        <taxon>Actinobacillus</taxon>
    </lineage>
</organism>
<comment type="function">
    <text evidence="1">The RecF protein is involved in DNA metabolism; it is required for DNA replication and normal SOS inducibility. RecF binds preferentially to single-stranded, linear DNA. It also seems to bind ATP.</text>
</comment>
<comment type="subcellular location">
    <subcellularLocation>
        <location evidence="1">Cytoplasm</location>
    </subcellularLocation>
</comment>
<comment type="similarity">
    <text evidence="1">Belongs to the RecF family.</text>
</comment>
<evidence type="ECO:0000255" key="1">
    <source>
        <dbReference type="HAMAP-Rule" id="MF_00365"/>
    </source>
</evidence>
<reference key="1">
    <citation type="journal article" date="2008" name="PLoS ONE">
        <title>Genome biology of Actinobacillus pleuropneumoniae JL03, an isolate of serotype 3 prevalent in China.</title>
        <authorList>
            <person name="Xu Z."/>
            <person name="Zhou Y."/>
            <person name="Li L."/>
            <person name="Zhou R."/>
            <person name="Xiao S."/>
            <person name="Wan Y."/>
            <person name="Zhang S."/>
            <person name="Wang K."/>
            <person name="Li W."/>
            <person name="Li L."/>
            <person name="Jin H."/>
            <person name="Kang M."/>
            <person name="Dalai B."/>
            <person name="Li T."/>
            <person name="Liu L."/>
            <person name="Cheng Y."/>
            <person name="Zhang L."/>
            <person name="Xu T."/>
            <person name="Zheng H."/>
            <person name="Pu S."/>
            <person name="Wang B."/>
            <person name="Gu W."/>
            <person name="Zhang X.L."/>
            <person name="Zhu G.-F."/>
            <person name="Wang S."/>
            <person name="Zhao G.-P."/>
            <person name="Chen H."/>
        </authorList>
    </citation>
    <scope>NUCLEOTIDE SEQUENCE [LARGE SCALE GENOMIC DNA]</scope>
    <source>
        <strain>JL03</strain>
    </source>
</reference>
<dbReference type="EMBL" id="CP000687">
    <property type="protein sequence ID" value="ABY68609.1"/>
    <property type="molecule type" value="Genomic_DNA"/>
</dbReference>
<dbReference type="RefSeq" id="WP_012262657.1">
    <property type="nucleotide sequence ID" value="NC_010278.1"/>
</dbReference>
<dbReference type="SMR" id="B0BRG1"/>
<dbReference type="KEGG" id="apj:APJL_0003"/>
<dbReference type="HOGENOM" id="CLU_040267_0_0_6"/>
<dbReference type="Proteomes" id="UP000008547">
    <property type="component" value="Chromosome"/>
</dbReference>
<dbReference type="GO" id="GO:0005737">
    <property type="term" value="C:cytoplasm"/>
    <property type="evidence" value="ECO:0007669"/>
    <property type="project" value="UniProtKB-SubCell"/>
</dbReference>
<dbReference type="GO" id="GO:0005524">
    <property type="term" value="F:ATP binding"/>
    <property type="evidence" value="ECO:0007669"/>
    <property type="project" value="UniProtKB-UniRule"/>
</dbReference>
<dbReference type="GO" id="GO:0003697">
    <property type="term" value="F:single-stranded DNA binding"/>
    <property type="evidence" value="ECO:0007669"/>
    <property type="project" value="UniProtKB-UniRule"/>
</dbReference>
<dbReference type="GO" id="GO:0006260">
    <property type="term" value="P:DNA replication"/>
    <property type="evidence" value="ECO:0007669"/>
    <property type="project" value="UniProtKB-UniRule"/>
</dbReference>
<dbReference type="GO" id="GO:0000731">
    <property type="term" value="P:DNA synthesis involved in DNA repair"/>
    <property type="evidence" value="ECO:0007669"/>
    <property type="project" value="TreeGrafter"/>
</dbReference>
<dbReference type="GO" id="GO:0006302">
    <property type="term" value="P:double-strand break repair"/>
    <property type="evidence" value="ECO:0007669"/>
    <property type="project" value="TreeGrafter"/>
</dbReference>
<dbReference type="GO" id="GO:0009432">
    <property type="term" value="P:SOS response"/>
    <property type="evidence" value="ECO:0007669"/>
    <property type="project" value="UniProtKB-UniRule"/>
</dbReference>
<dbReference type="FunFam" id="1.20.1050.90:FF:000001">
    <property type="entry name" value="DNA replication and repair protein RecF"/>
    <property type="match status" value="1"/>
</dbReference>
<dbReference type="Gene3D" id="3.40.50.300">
    <property type="entry name" value="P-loop containing nucleotide triphosphate hydrolases"/>
    <property type="match status" value="1"/>
</dbReference>
<dbReference type="Gene3D" id="1.20.1050.90">
    <property type="entry name" value="RecF/RecN/SMC, N-terminal domain"/>
    <property type="match status" value="1"/>
</dbReference>
<dbReference type="HAMAP" id="MF_00365">
    <property type="entry name" value="RecF"/>
    <property type="match status" value="1"/>
</dbReference>
<dbReference type="InterPro" id="IPR001238">
    <property type="entry name" value="DNA-binding_RecF"/>
</dbReference>
<dbReference type="InterPro" id="IPR018078">
    <property type="entry name" value="DNA-binding_RecF_CS"/>
</dbReference>
<dbReference type="InterPro" id="IPR027417">
    <property type="entry name" value="P-loop_NTPase"/>
</dbReference>
<dbReference type="InterPro" id="IPR003395">
    <property type="entry name" value="RecF/RecN/SMC_N"/>
</dbReference>
<dbReference type="InterPro" id="IPR042174">
    <property type="entry name" value="RecF_2"/>
</dbReference>
<dbReference type="NCBIfam" id="TIGR00611">
    <property type="entry name" value="recf"/>
    <property type="match status" value="1"/>
</dbReference>
<dbReference type="PANTHER" id="PTHR32182">
    <property type="entry name" value="DNA REPLICATION AND REPAIR PROTEIN RECF"/>
    <property type="match status" value="1"/>
</dbReference>
<dbReference type="PANTHER" id="PTHR32182:SF0">
    <property type="entry name" value="DNA REPLICATION AND REPAIR PROTEIN RECF"/>
    <property type="match status" value="1"/>
</dbReference>
<dbReference type="Pfam" id="PF02463">
    <property type="entry name" value="SMC_N"/>
    <property type="match status" value="1"/>
</dbReference>
<dbReference type="SUPFAM" id="SSF52540">
    <property type="entry name" value="P-loop containing nucleoside triphosphate hydrolases"/>
    <property type="match status" value="1"/>
</dbReference>
<dbReference type="PROSITE" id="PS00617">
    <property type="entry name" value="RECF_1"/>
    <property type="match status" value="1"/>
</dbReference>
<dbReference type="PROSITE" id="PS00618">
    <property type="entry name" value="RECF_2"/>
    <property type="match status" value="1"/>
</dbReference>
<keyword id="KW-0067">ATP-binding</keyword>
<keyword id="KW-0963">Cytoplasm</keyword>
<keyword id="KW-0227">DNA damage</keyword>
<keyword id="KW-0234">DNA repair</keyword>
<keyword id="KW-0235">DNA replication</keyword>
<keyword id="KW-0238">DNA-binding</keyword>
<keyword id="KW-0547">Nucleotide-binding</keyword>
<keyword id="KW-0742">SOS response</keyword>
<protein>
    <recommendedName>
        <fullName evidence="1">DNA replication and repair protein RecF</fullName>
    </recommendedName>
</protein>
<name>RECF_ACTPJ</name>
<feature type="chain" id="PRO_1000121083" description="DNA replication and repair protein RecF">
    <location>
        <begin position="1"/>
        <end position="360"/>
    </location>
</feature>
<feature type="binding site" evidence="1">
    <location>
        <begin position="30"/>
        <end position="37"/>
    </location>
    <ligand>
        <name>ATP</name>
        <dbReference type="ChEBI" id="CHEBI:30616"/>
    </ligand>
</feature>
<gene>
    <name evidence="1" type="primary">recF</name>
    <name type="ordered locus">APJL_0003</name>
</gene>
<accession>B0BRG1</accession>
<proteinExistence type="inferred from homology"/>